<gene>
    <name evidence="8" type="primary">trt9</name>
    <name type="ORF">ATEG_10086</name>
</gene>
<protein>
    <recommendedName>
        <fullName evidence="8">Short chain dehydrogenase trt9</fullName>
        <ecNumber evidence="10">1.1.1.-</ecNumber>
    </recommendedName>
    <alternativeName>
        <fullName evidence="8">Terretonin synthesis protein 9</fullName>
    </alternativeName>
</protein>
<keyword id="KW-0521">NADP</keyword>
<keyword id="KW-0560">Oxidoreductase</keyword>
<keyword id="KW-1185">Reference proteome</keyword>
<organism>
    <name type="scientific">Aspergillus terreus (strain NIH 2624 / FGSC A1156)</name>
    <dbReference type="NCBI Taxonomy" id="341663"/>
    <lineage>
        <taxon>Eukaryota</taxon>
        <taxon>Fungi</taxon>
        <taxon>Dikarya</taxon>
        <taxon>Ascomycota</taxon>
        <taxon>Pezizomycotina</taxon>
        <taxon>Eurotiomycetes</taxon>
        <taxon>Eurotiomycetidae</taxon>
        <taxon>Eurotiales</taxon>
        <taxon>Aspergillaceae</taxon>
        <taxon>Aspergillus</taxon>
        <taxon>Aspergillus subgen. Circumdati</taxon>
    </lineage>
</organism>
<name>TRT9_ASPTN</name>
<sequence>MALDQGAKVFGVDIAASPAPLANHPNYKFLKADLCDKQTPKDVVQACVKMFGGRIDGLLNIAGIMDSNQSVDSVSDEMWDRCIAVNLTAPIRLMREVIAIMREQKSGNIVNVASKAATSGAVSGVAYTASKHGLVGATKNVAWRFKHDNIRCNAVCPGGVVGTGVHNEMDIQKWDKEAMKTMFLIHQSHSCDKDKGIGLRAEDIARPLLFLVSDRSKGINGAILPIDNAWSTI</sequence>
<comment type="function">
    <text evidence="3 4 5 6 7">Short chain dehydrogenase; part of the gene cluster that mediates the biosynthesis of terretonin, a fungal meroterpenoid that acts as a mycotoxin (PubMed:22549923, PubMed:23116177, PubMed:25671343). The first step of the pathway is the synthesis of 3,5-dimethylorsellinic acid (DMOA) by the polyketide synthase trt4 (PubMed:22549923, PubMed:23116177). DMOA is then prenylated into farnesyl-DMOA by the polyprenyl transferase trt2 (PubMed:22549923, PubMed:22782788, PubMed:23116177). Methylation by the methyltransferase trt5 then leads to farnesyl-DMOA methyl ester which is further subject to epoxidation by the FAD-dependent monooxygenase trt8 to yield epoxyfarnesyl-DMOA methyl ester (PubMed:22549923, PubMed:22782788, PubMed:23116177). Cyclization of epoxyfarnesyl-DMOA methyl ester by the terpene cyclase trt1 leads to a tetracycle intermediate which is in turn converted to preterretonin (PubMed:22549923, PubMed:22782788, PubMed:23116177). Dehydrogenase trt9 comes next to transform preterretonin to preterrenoid (PubMed:22549923, PubMed:23116177). The FAD-dependent monooxygenase trt3 is then required for the C-hydroxylation at C16 of preterrenoid to yield terrenoid (PubMed:22549923, PubMed:23116177). The cytochrome P450 trt6 catalyzes three successive oxidations to transform terrenoid into an unstable intermediate, which then undergoes the D-ring expansion and unusual rearrangement of the methoxy group to afford the core skeleton of terretonin (PubMed:25671343, PubMed:28759016). Trt14 catalyzes the D-ring expansion of terretonin involving intramolecular methoxy rearrangement as well as the hydrolysis of the expanded D-ring and the methyl ester moiety (PubMed:25671343, PubMed:28759016). Finally, the nonheme iron-dependent dioxygenase trt7 accomplishes the last two oxidation reactions steps to complete the biosynthesis of terretonin (PubMed:25671343). Terretonin C is produced via spontaneous decarboxylation of the terretonin precursor (PubMed:23116177). Another shunt product of the terretonin biosynthesis is dihydrofarnesyl-DMOA, derived from epoxyfarnesyl-DMOA through hydrolysis of the epoxide (PubMed:22549923, PubMed:22782788, PubMed:23116177).</text>
</comment>
<comment type="pathway">
    <text evidence="5">Secondary metabolite biosynthesis; terpenoid biosynthesis.</text>
</comment>
<comment type="disruption phenotype">
    <text evidence="5">Impairs the synthesis of terretonin (PubMed:23116177).</text>
</comment>
<comment type="similarity">
    <text evidence="9">Belongs to the short-chain dehydrogenases/reductases (SDR) family.</text>
</comment>
<dbReference type="EC" id="1.1.1.-" evidence="10"/>
<dbReference type="EMBL" id="CH476609">
    <property type="protein sequence ID" value="EAU29535.1"/>
    <property type="molecule type" value="Genomic_DNA"/>
</dbReference>
<dbReference type="RefSeq" id="XP_001209388.1">
    <property type="nucleotide sequence ID" value="XM_001209388.1"/>
</dbReference>
<dbReference type="SMR" id="Q0C898"/>
<dbReference type="STRING" id="341663.Q0C898"/>
<dbReference type="EnsemblFungi" id="EAU29535">
    <property type="protein sequence ID" value="EAU29535"/>
    <property type="gene ID" value="ATEG_10086"/>
</dbReference>
<dbReference type="GeneID" id="4319524"/>
<dbReference type="VEuPathDB" id="FungiDB:ATEG_10086"/>
<dbReference type="eggNOG" id="KOG0725">
    <property type="taxonomic scope" value="Eukaryota"/>
</dbReference>
<dbReference type="HOGENOM" id="CLU_010194_1_0_1"/>
<dbReference type="OMA" id="IPIDNAW"/>
<dbReference type="OrthoDB" id="37659at2759"/>
<dbReference type="UniPathway" id="UPA00213"/>
<dbReference type="Proteomes" id="UP000007963">
    <property type="component" value="Unassembled WGS sequence"/>
</dbReference>
<dbReference type="GO" id="GO:0016491">
    <property type="term" value="F:oxidoreductase activity"/>
    <property type="evidence" value="ECO:0007669"/>
    <property type="project" value="UniProtKB-KW"/>
</dbReference>
<dbReference type="GO" id="GO:0016114">
    <property type="term" value="P:terpenoid biosynthetic process"/>
    <property type="evidence" value="ECO:0007669"/>
    <property type="project" value="UniProtKB-UniPathway"/>
</dbReference>
<dbReference type="CDD" id="cd05233">
    <property type="entry name" value="SDR_c"/>
    <property type="match status" value="1"/>
</dbReference>
<dbReference type="Gene3D" id="3.40.50.720">
    <property type="entry name" value="NAD(P)-binding Rossmann-like Domain"/>
    <property type="match status" value="1"/>
</dbReference>
<dbReference type="InterPro" id="IPR036291">
    <property type="entry name" value="NAD(P)-bd_dom_sf"/>
</dbReference>
<dbReference type="InterPro" id="IPR002347">
    <property type="entry name" value="SDR_fam"/>
</dbReference>
<dbReference type="PANTHER" id="PTHR24321">
    <property type="entry name" value="DEHYDROGENASES, SHORT CHAIN"/>
    <property type="match status" value="1"/>
</dbReference>
<dbReference type="PANTHER" id="PTHR24321:SF8">
    <property type="entry name" value="ESTRADIOL 17-BETA-DEHYDROGENASE 8-RELATED"/>
    <property type="match status" value="1"/>
</dbReference>
<dbReference type="Pfam" id="PF13561">
    <property type="entry name" value="adh_short_C2"/>
    <property type="match status" value="1"/>
</dbReference>
<dbReference type="PRINTS" id="PR00081">
    <property type="entry name" value="GDHRDH"/>
</dbReference>
<dbReference type="PRINTS" id="PR00080">
    <property type="entry name" value="SDRFAMILY"/>
</dbReference>
<dbReference type="SUPFAM" id="SSF51735">
    <property type="entry name" value="NAD(P)-binding Rossmann-fold domains"/>
    <property type="match status" value="1"/>
</dbReference>
<reference key="1">
    <citation type="submission" date="2005-09" db="EMBL/GenBank/DDBJ databases">
        <title>Annotation of the Aspergillus terreus NIH2624 genome.</title>
        <authorList>
            <person name="Birren B.W."/>
            <person name="Lander E.S."/>
            <person name="Galagan J.E."/>
            <person name="Nusbaum C."/>
            <person name="Devon K."/>
            <person name="Henn M."/>
            <person name="Ma L.-J."/>
            <person name="Jaffe D.B."/>
            <person name="Butler J."/>
            <person name="Alvarez P."/>
            <person name="Gnerre S."/>
            <person name="Grabherr M."/>
            <person name="Kleber M."/>
            <person name="Mauceli E.W."/>
            <person name="Brockman W."/>
            <person name="Rounsley S."/>
            <person name="Young S.K."/>
            <person name="LaButti K."/>
            <person name="Pushparaj V."/>
            <person name="DeCaprio D."/>
            <person name="Crawford M."/>
            <person name="Koehrsen M."/>
            <person name="Engels R."/>
            <person name="Montgomery P."/>
            <person name="Pearson M."/>
            <person name="Howarth C."/>
            <person name="Larson L."/>
            <person name="Luoma S."/>
            <person name="White J."/>
            <person name="Alvarado L."/>
            <person name="Kodira C.D."/>
            <person name="Zeng Q."/>
            <person name="Oleary S."/>
            <person name="Yandava C."/>
            <person name="Denning D.W."/>
            <person name="Nierman W.C."/>
            <person name="Milne T."/>
            <person name="Madden K."/>
        </authorList>
    </citation>
    <scope>NUCLEOTIDE SEQUENCE [LARGE SCALE GENOMIC DNA]</scope>
    <source>
        <strain>NIH 2624 / FGSC A1156</strain>
    </source>
</reference>
<reference key="2">
    <citation type="journal article" date="2012" name="ChemBioChem">
        <title>Identification of a key prenyltransferase involved in biosynthesis of the most abundant fungal meroterpenoids derived from 3,5-dimethylorsellinic acid.</title>
        <authorList>
            <person name="Itoh T."/>
            <person name="Tokunaga K."/>
            <person name="Radhakrishnan E.K."/>
            <person name="Fujii I."/>
            <person name="Abe I."/>
            <person name="Ebizuka Y."/>
            <person name="Kushiro T."/>
        </authorList>
    </citation>
    <scope>FUNCTION</scope>
</reference>
<reference key="3">
    <citation type="journal article" date="2012" name="ChemBioChem">
        <title>Terretonin biosynthesis requires methylation as essential step for cyclization.</title>
        <authorList>
            <person name="Matsuda Y."/>
            <person name="Awakawa T."/>
            <person name="Itoh T."/>
            <person name="Wakimoto T."/>
            <person name="Kushiro T."/>
            <person name="Fujii I."/>
            <person name="Ebizuka Y."/>
            <person name="Abe I."/>
        </authorList>
    </citation>
    <scope>FUNCTION</scope>
</reference>
<reference key="4">
    <citation type="journal article" date="2012" name="Org. Lett.">
        <title>Molecular genetic characterization of a cluster in A. terreus for biosynthesis of the meroterpenoid terretonin.</title>
        <authorList>
            <person name="Guo C.J."/>
            <person name="Knox B.P."/>
            <person name="Chiang Y.M."/>
            <person name="Lo H.C."/>
            <person name="Sanchez J.F."/>
            <person name="Lee K.H."/>
            <person name="Oakley B.R."/>
            <person name="Bruno K.S."/>
            <person name="Wang C.C."/>
        </authorList>
    </citation>
    <scope>FUNCTION</scope>
    <scope>CATALYTIC ACTIVITY</scope>
    <scope>DISRUPTION PHENOTYPE</scope>
</reference>
<reference key="5">
    <citation type="journal article" date="2015" name="J. Am. Chem. Soc.">
        <title>Uncovering the unusual D-ring construction in terretonin biosynthesis by collaboration of a multifunctional cytochrome P450 and a unique isomerase.</title>
        <authorList>
            <person name="Matsuda Y."/>
            <person name="Iwabuchi T."/>
            <person name="Wakimoto T."/>
            <person name="Awakawa T."/>
            <person name="Abe I."/>
        </authorList>
    </citation>
    <scope>FUNCTION</scope>
</reference>
<reference key="6">
    <citation type="journal article" date="2017" name="Nat. Chem. Biol.">
        <title>Molecular basis for the unusual ring reconstruction in fungal meroterpenoid biogenesis.</title>
        <authorList>
            <person name="Mori T."/>
            <person name="Iwabuchi T."/>
            <person name="Hoshino S."/>
            <person name="Wang H."/>
            <person name="Matsuda Y."/>
            <person name="Abe I."/>
        </authorList>
    </citation>
    <scope>FUNCTION</scope>
</reference>
<feature type="chain" id="PRO_0000436598" description="Short chain dehydrogenase trt9">
    <location>
        <begin position="1"/>
        <end position="233"/>
    </location>
</feature>
<feature type="active site" description="Proton donor" evidence="2">
    <location>
        <position position="127"/>
    </location>
</feature>
<feature type="active site" description="Lowers pKa of active site Tyr" evidence="2">
    <location>
        <position position="131"/>
    </location>
</feature>
<feature type="binding site" evidence="1">
    <location>
        <position position="33"/>
    </location>
    <ligand>
        <name>NADP(+)</name>
        <dbReference type="ChEBI" id="CHEBI:58349"/>
    </ligand>
</feature>
<feature type="binding site" evidence="1">
    <location>
        <position position="95"/>
    </location>
    <ligand>
        <name>NADP(+)</name>
        <dbReference type="ChEBI" id="CHEBI:58349"/>
    </ligand>
</feature>
<feature type="binding site" evidence="2">
    <location>
        <position position="127"/>
    </location>
    <ligand>
        <name>NADP(+)</name>
        <dbReference type="ChEBI" id="CHEBI:58349"/>
    </ligand>
</feature>
<feature type="binding site" evidence="2">
    <location>
        <position position="131"/>
    </location>
    <ligand>
        <name>NADP(+)</name>
        <dbReference type="ChEBI" id="CHEBI:58349"/>
    </ligand>
</feature>
<feature type="binding site" evidence="2">
    <location>
        <position position="160"/>
    </location>
    <ligand>
        <name>NADP(+)</name>
        <dbReference type="ChEBI" id="CHEBI:58349"/>
    </ligand>
</feature>
<evidence type="ECO:0000250" key="1">
    <source>
        <dbReference type="UniProtKB" id="L0E2Z4"/>
    </source>
</evidence>
<evidence type="ECO:0000250" key="2">
    <source>
        <dbReference type="UniProtKB" id="O93868"/>
    </source>
</evidence>
<evidence type="ECO:0000269" key="3">
    <source>
    </source>
</evidence>
<evidence type="ECO:0000269" key="4">
    <source>
    </source>
</evidence>
<evidence type="ECO:0000269" key="5">
    <source>
    </source>
</evidence>
<evidence type="ECO:0000269" key="6">
    <source>
    </source>
</evidence>
<evidence type="ECO:0000269" key="7">
    <source>
    </source>
</evidence>
<evidence type="ECO:0000303" key="8">
    <source>
    </source>
</evidence>
<evidence type="ECO:0000305" key="9"/>
<evidence type="ECO:0000305" key="10">
    <source>
    </source>
</evidence>
<proteinExistence type="evidence at protein level"/>
<accession>Q0C898</accession>